<gene>
    <name evidence="1" type="primary">aroC1</name>
    <name type="ordered locus">BCE33L1398</name>
</gene>
<accession>Q63DL6</accession>
<protein>
    <recommendedName>
        <fullName evidence="1">Chorismate synthase 1</fullName>
        <shortName evidence="1">CS 1</shortName>
        <ecNumber evidence="1">4.2.3.5</ecNumber>
    </recommendedName>
    <alternativeName>
        <fullName evidence="1">5-enolpyruvylshikimate-3-phosphate phospholyase 1</fullName>
    </alternativeName>
</protein>
<organism>
    <name type="scientific">Bacillus cereus (strain ZK / E33L)</name>
    <dbReference type="NCBI Taxonomy" id="288681"/>
    <lineage>
        <taxon>Bacteria</taxon>
        <taxon>Bacillati</taxon>
        <taxon>Bacillota</taxon>
        <taxon>Bacilli</taxon>
        <taxon>Bacillales</taxon>
        <taxon>Bacillaceae</taxon>
        <taxon>Bacillus</taxon>
        <taxon>Bacillus cereus group</taxon>
    </lineage>
</organism>
<sequence length="390" mass="42408">MRYITAGESHGPQLTTIIEGVPAGLPLVADDINEELARRQKGYGRGRRMQIETDQVQIVSGVRHGETLGSPIALVVENRDFAHWTKIMGAEPLTEQEEKEMKRKVTKPRPGHADLNGAIKYGHRDMRNVLERSSARETTVRVAAGAVAKKVLAELGIAVAGHVIEIGGVQAKETTYRSIEELKSITEASPVRCLDEEAGNQMIKAIDDAKSNGDSIGGIVEVIVEGMPIGVGSYVHYDRKLDAKLAAAIMSINAFKGVEIGIGFEAAHRPGSEVHDEILWDEEHGYTRRTNNAGGLEGGMTTGMPIVVRGVMKPIPTLYKPLQSVDIDTKEPFTASIERSDSCAVPAASVVAEAVVAWELATALIEQFGLDRMDLIRENIEKHNEYARGF</sequence>
<evidence type="ECO:0000255" key="1">
    <source>
        <dbReference type="HAMAP-Rule" id="MF_00300"/>
    </source>
</evidence>
<evidence type="ECO:0000256" key="2">
    <source>
        <dbReference type="SAM" id="MobiDB-lite"/>
    </source>
</evidence>
<comment type="function">
    <text evidence="1">Catalyzes the anti-1,4-elimination of the C-3 phosphate and the C-6 proR hydrogen from 5-enolpyruvylshikimate-3-phosphate (EPSP) to yield chorismate, which is the branch point compound that serves as the starting substrate for the three terminal pathways of aromatic amino acid biosynthesis. This reaction introduces a second double bond into the aromatic ring system.</text>
</comment>
<comment type="catalytic activity">
    <reaction evidence="1">
        <text>5-O-(1-carboxyvinyl)-3-phosphoshikimate = chorismate + phosphate</text>
        <dbReference type="Rhea" id="RHEA:21020"/>
        <dbReference type="ChEBI" id="CHEBI:29748"/>
        <dbReference type="ChEBI" id="CHEBI:43474"/>
        <dbReference type="ChEBI" id="CHEBI:57701"/>
        <dbReference type="EC" id="4.2.3.5"/>
    </reaction>
</comment>
<comment type="cofactor">
    <cofactor evidence="1">
        <name>FMNH2</name>
        <dbReference type="ChEBI" id="CHEBI:57618"/>
    </cofactor>
    <text evidence="1">Reduced FMN (FMNH(2)).</text>
</comment>
<comment type="pathway">
    <text evidence="1">Metabolic intermediate biosynthesis; chorismate biosynthesis; chorismate from D-erythrose 4-phosphate and phosphoenolpyruvate: step 7/7.</text>
</comment>
<comment type="subunit">
    <text evidence="1">Homotetramer.</text>
</comment>
<comment type="similarity">
    <text evidence="1">Belongs to the chorismate synthase family.</text>
</comment>
<feature type="chain" id="PRO_0000140545" description="Chorismate synthase 1">
    <location>
        <begin position="1"/>
        <end position="390"/>
    </location>
</feature>
<feature type="region of interest" description="Disordered" evidence="2">
    <location>
        <begin position="95"/>
        <end position="117"/>
    </location>
</feature>
<feature type="binding site" evidence="1">
    <location>
        <position position="39"/>
    </location>
    <ligand>
        <name>NADP(+)</name>
        <dbReference type="ChEBI" id="CHEBI:58349"/>
    </ligand>
</feature>
<feature type="binding site" evidence="1">
    <location>
        <position position="45"/>
    </location>
    <ligand>
        <name>NADP(+)</name>
        <dbReference type="ChEBI" id="CHEBI:58349"/>
    </ligand>
</feature>
<feature type="binding site" evidence="1">
    <location>
        <begin position="132"/>
        <end position="134"/>
    </location>
    <ligand>
        <name>FMN</name>
        <dbReference type="ChEBI" id="CHEBI:58210"/>
    </ligand>
</feature>
<feature type="binding site" evidence="1">
    <location>
        <begin position="253"/>
        <end position="254"/>
    </location>
    <ligand>
        <name>FMN</name>
        <dbReference type="ChEBI" id="CHEBI:58210"/>
    </ligand>
</feature>
<feature type="binding site" evidence="1">
    <location>
        <position position="298"/>
    </location>
    <ligand>
        <name>FMN</name>
        <dbReference type="ChEBI" id="CHEBI:58210"/>
    </ligand>
</feature>
<feature type="binding site" evidence="1">
    <location>
        <begin position="313"/>
        <end position="317"/>
    </location>
    <ligand>
        <name>FMN</name>
        <dbReference type="ChEBI" id="CHEBI:58210"/>
    </ligand>
</feature>
<feature type="binding site" evidence="1">
    <location>
        <position position="339"/>
    </location>
    <ligand>
        <name>FMN</name>
        <dbReference type="ChEBI" id="CHEBI:58210"/>
    </ligand>
</feature>
<proteinExistence type="inferred from homology"/>
<name>AROC1_BACCZ</name>
<keyword id="KW-0028">Amino-acid biosynthesis</keyword>
<keyword id="KW-0057">Aromatic amino acid biosynthesis</keyword>
<keyword id="KW-0274">FAD</keyword>
<keyword id="KW-0285">Flavoprotein</keyword>
<keyword id="KW-0288">FMN</keyword>
<keyword id="KW-0456">Lyase</keyword>
<keyword id="KW-0521">NADP</keyword>
<dbReference type="EC" id="4.2.3.5" evidence="1"/>
<dbReference type="EMBL" id="CP000001">
    <property type="protein sequence ID" value="AAU18851.1"/>
    <property type="molecule type" value="Genomic_DNA"/>
</dbReference>
<dbReference type="SMR" id="Q63DL6"/>
<dbReference type="KEGG" id="bcz:BCE33L1398"/>
<dbReference type="PATRIC" id="fig|288681.22.peg.4154"/>
<dbReference type="UniPathway" id="UPA00053">
    <property type="reaction ID" value="UER00090"/>
</dbReference>
<dbReference type="Proteomes" id="UP000002612">
    <property type="component" value="Chromosome"/>
</dbReference>
<dbReference type="GO" id="GO:0005829">
    <property type="term" value="C:cytosol"/>
    <property type="evidence" value="ECO:0007669"/>
    <property type="project" value="TreeGrafter"/>
</dbReference>
<dbReference type="GO" id="GO:0004107">
    <property type="term" value="F:chorismate synthase activity"/>
    <property type="evidence" value="ECO:0007669"/>
    <property type="project" value="UniProtKB-UniRule"/>
</dbReference>
<dbReference type="GO" id="GO:0010181">
    <property type="term" value="F:FMN binding"/>
    <property type="evidence" value="ECO:0007669"/>
    <property type="project" value="TreeGrafter"/>
</dbReference>
<dbReference type="GO" id="GO:0008652">
    <property type="term" value="P:amino acid biosynthetic process"/>
    <property type="evidence" value="ECO:0007669"/>
    <property type="project" value="UniProtKB-KW"/>
</dbReference>
<dbReference type="GO" id="GO:0009073">
    <property type="term" value="P:aromatic amino acid family biosynthetic process"/>
    <property type="evidence" value="ECO:0007669"/>
    <property type="project" value="UniProtKB-KW"/>
</dbReference>
<dbReference type="GO" id="GO:0009423">
    <property type="term" value="P:chorismate biosynthetic process"/>
    <property type="evidence" value="ECO:0007669"/>
    <property type="project" value="UniProtKB-UniRule"/>
</dbReference>
<dbReference type="CDD" id="cd07304">
    <property type="entry name" value="Chorismate_synthase"/>
    <property type="match status" value="1"/>
</dbReference>
<dbReference type="FunFam" id="3.60.150.10:FF:000002">
    <property type="entry name" value="Chorismate synthase"/>
    <property type="match status" value="1"/>
</dbReference>
<dbReference type="Gene3D" id="3.60.150.10">
    <property type="entry name" value="Chorismate synthase AroC"/>
    <property type="match status" value="1"/>
</dbReference>
<dbReference type="HAMAP" id="MF_00300">
    <property type="entry name" value="Chorismate_synth"/>
    <property type="match status" value="1"/>
</dbReference>
<dbReference type="InterPro" id="IPR000453">
    <property type="entry name" value="Chorismate_synth"/>
</dbReference>
<dbReference type="InterPro" id="IPR035904">
    <property type="entry name" value="Chorismate_synth_AroC_sf"/>
</dbReference>
<dbReference type="InterPro" id="IPR020541">
    <property type="entry name" value="Chorismate_synthase_CS"/>
</dbReference>
<dbReference type="NCBIfam" id="TIGR00033">
    <property type="entry name" value="aroC"/>
    <property type="match status" value="1"/>
</dbReference>
<dbReference type="NCBIfam" id="NF003793">
    <property type="entry name" value="PRK05382.1"/>
    <property type="match status" value="1"/>
</dbReference>
<dbReference type="PANTHER" id="PTHR21085">
    <property type="entry name" value="CHORISMATE SYNTHASE"/>
    <property type="match status" value="1"/>
</dbReference>
<dbReference type="PANTHER" id="PTHR21085:SF0">
    <property type="entry name" value="CHORISMATE SYNTHASE"/>
    <property type="match status" value="1"/>
</dbReference>
<dbReference type="Pfam" id="PF01264">
    <property type="entry name" value="Chorismate_synt"/>
    <property type="match status" value="1"/>
</dbReference>
<dbReference type="PIRSF" id="PIRSF001456">
    <property type="entry name" value="Chorismate_synth"/>
    <property type="match status" value="1"/>
</dbReference>
<dbReference type="SUPFAM" id="SSF103263">
    <property type="entry name" value="Chorismate synthase, AroC"/>
    <property type="match status" value="1"/>
</dbReference>
<dbReference type="PROSITE" id="PS00787">
    <property type="entry name" value="CHORISMATE_SYNTHASE_1"/>
    <property type="match status" value="1"/>
</dbReference>
<dbReference type="PROSITE" id="PS00788">
    <property type="entry name" value="CHORISMATE_SYNTHASE_2"/>
    <property type="match status" value="1"/>
</dbReference>
<dbReference type="PROSITE" id="PS00789">
    <property type="entry name" value="CHORISMATE_SYNTHASE_3"/>
    <property type="match status" value="1"/>
</dbReference>
<reference key="1">
    <citation type="journal article" date="2006" name="J. Bacteriol.">
        <title>Pathogenomic sequence analysis of Bacillus cereus and Bacillus thuringiensis isolates closely related to Bacillus anthracis.</title>
        <authorList>
            <person name="Han C.S."/>
            <person name="Xie G."/>
            <person name="Challacombe J.F."/>
            <person name="Altherr M.R."/>
            <person name="Bhotika S.S."/>
            <person name="Bruce D."/>
            <person name="Campbell C.S."/>
            <person name="Campbell M.L."/>
            <person name="Chen J."/>
            <person name="Chertkov O."/>
            <person name="Cleland C."/>
            <person name="Dimitrijevic M."/>
            <person name="Doggett N.A."/>
            <person name="Fawcett J.J."/>
            <person name="Glavina T."/>
            <person name="Goodwin L.A."/>
            <person name="Hill K.K."/>
            <person name="Hitchcock P."/>
            <person name="Jackson P.J."/>
            <person name="Keim P."/>
            <person name="Kewalramani A.R."/>
            <person name="Longmire J."/>
            <person name="Lucas S."/>
            <person name="Malfatti S."/>
            <person name="McMurry K."/>
            <person name="Meincke L.J."/>
            <person name="Misra M."/>
            <person name="Moseman B.L."/>
            <person name="Mundt M."/>
            <person name="Munk A.C."/>
            <person name="Okinaka R.T."/>
            <person name="Parson-Quintana B."/>
            <person name="Reilly L.P."/>
            <person name="Richardson P."/>
            <person name="Robinson D.L."/>
            <person name="Rubin E."/>
            <person name="Saunders E."/>
            <person name="Tapia R."/>
            <person name="Tesmer J.G."/>
            <person name="Thayer N."/>
            <person name="Thompson L.S."/>
            <person name="Tice H."/>
            <person name="Ticknor L.O."/>
            <person name="Wills P.L."/>
            <person name="Brettin T.S."/>
            <person name="Gilna P."/>
        </authorList>
    </citation>
    <scope>NUCLEOTIDE SEQUENCE [LARGE SCALE GENOMIC DNA]</scope>
    <source>
        <strain>ZK / E33L</strain>
    </source>
</reference>